<organism>
    <name type="scientific">Streptococcus mutans serotype c (strain ATCC 700610 / UA159)</name>
    <dbReference type="NCBI Taxonomy" id="210007"/>
    <lineage>
        <taxon>Bacteria</taxon>
        <taxon>Bacillati</taxon>
        <taxon>Bacillota</taxon>
        <taxon>Bacilli</taxon>
        <taxon>Lactobacillales</taxon>
        <taxon>Streptococcaceae</taxon>
        <taxon>Streptococcus</taxon>
    </lineage>
</organism>
<proteinExistence type="inferred from homology"/>
<accession>Q8CWZ1</accession>
<sequence>MLFFEIIKAIIFGIVEGITEWLPISSTGHLILVEEFIHFNNANAAFTNMFNVVIQLGAILAVVVIYFDRLNPFKSGKTAREVQITWQLWAKVILSALPAAVIGLIFDDWLDAHFQNFFSVALMLILYGIAFIYVERRHQGVEPQVTHLVSLPYKTAFFIGLFQVLSLIPGTSRSGATILGGILLGTSRQVATEFTFFLGIPIMFGASLVKVLKFIVSGTILTGSQLFILLVAMLVAFAVSLYVIRFLTDYVKNHDFTFFGKYRIGLGILLLFYGLMKVLFG</sequence>
<keyword id="KW-0046">Antibiotic resistance</keyword>
<keyword id="KW-1003">Cell membrane</keyword>
<keyword id="KW-0133">Cell shape</keyword>
<keyword id="KW-0961">Cell wall biogenesis/degradation</keyword>
<keyword id="KW-0378">Hydrolase</keyword>
<keyword id="KW-0472">Membrane</keyword>
<keyword id="KW-0573">Peptidoglycan synthesis</keyword>
<keyword id="KW-1185">Reference proteome</keyword>
<keyword id="KW-0812">Transmembrane</keyword>
<keyword id="KW-1133">Transmembrane helix</keyword>
<feature type="chain" id="PRO_0000151213" description="Undecaprenyl-diphosphatase">
    <location>
        <begin position="1"/>
        <end position="281"/>
    </location>
</feature>
<feature type="transmembrane region" description="Helical" evidence="1">
    <location>
        <begin position="45"/>
        <end position="65"/>
    </location>
</feature>
<feature type="transmembrane region" description="Helical" evidence="1">
    <location>
        <begin position="86"/>
        <end position="106"/>
    </location>
</feature>
<feature type="transmembrane region" description="Helical" evidence="1">
    <location>
        <begin position="114"/>
        <end position="134"/>
    </location>
</feature>
<feature type="transmembrane region" description="Helical" evidence="1">
    <location>
        <begin position="148"/>
        <end position="168"/>
    </location>
</feature>
<feature type="transmembrane region" description="Helical" evidence="1">
    <location>
        <begin position="196"/>
        <end position="216"/>
    </location>
</feature>
<feature type="transmembrane region" description="Helical" evidence="1">
    <location>
        <begin position="224"/>
        <end position="244"/>
    </location>
</feature>
<feature type="transmembrane region" description="Helical" evidence="1">
    <location>
        <begin position="256"/>
        <end position="276"/>
    </location>
</feature>
<protein>
    <recommendedName>
        <fullName evidence="1">Undecaprenyl-diphosphatase</fullName>
        <ecNumber evidence="1">3.6.1.27</ecNumber>
    </recommendedName>
    <alternativeName>
        <fullName evidence="1">Bacitracin resistance protein</fullName>
    </alternativeName>
    <alternativeName>
        <fullName evidence="1">Undecaprenyl pyrophosphate phosphatase</fullName>
    </alternativeName>
</protein>
<name>UPPP_STRMU</name>
<dbReference type="EC" id="3.6.1.27" evidence="1"/>
<dbReference type="EMBL" id="AE014133">
    <property type="protein sequence ID" value="AAN58014.1"/>
    <property type="molecule type" value="Genomic_DNA"/>
</dbReference>
<dbReference type="RefSeq" id="NP_720708.1">
    <property type="nucleotide sequence ID" value="NC_004350.2"/>
</dbReference>
<dbReference type="RefSeq" id="WP_002262750.1">
    <property type="nucleotide sequence ID" value="NC_004350.2"/>
</dbReference>
<dbReference type="SMR" id="Q8CWZ1"/>
<dbReference type="STRING" id="210007.SMU_244"/>
<dbReference type="KEGG" id="smu:SMU_244"/>
<dbReference type="PATRIC" id="fig|210007.7.peg.211"/>
<dbReference type="eggNOG" id="COG1968">
    <property type="taxonomic scope" value="Bacteria"/>
</dbReference>
<dbReference type="HOGENOM" id="CLU_060296_2_0_9"/>
<dbReference type="OrthoDB" id="9808289at2"/>
<dbReference type="PhylomeDB" id="Q8CWZ1"/>
<dbReference type="Proteomes" id="UP000002512">
    <property type="component" value="Chromosome"/>
</dbReference>
<dbReference type="GO" id="GO:0005886">
    <property type="term" value="C:plasma membrane"/>
    <property type="evidence" value="ECO:0007669"/>
    <property type="project" value="UniProtKB-SubCell"/>
</dbReference>
<dbReference type="GO" id="GO:0050380">
    <property type="term" value="F:undecaprenyl-diphosphatase activity"/>
    <property type="evidence" value="ECO:0007669"/>
    <property type="project" value="UniProtKB-UniRule"/>
</dbReference>
<dbReference type="GO" id="GO:0071555">
    <property type="term" value="P:cell wall organization"/>
    <property type="evidence" value="ECO:0007669"/>
    <property type="project" value="UniProtKB-KW"/>
</dbReference>
<dbReference type="GO" id="GO:0009252">
    <property type="term" value="P:peptidoglycan biosynthetic process"/>
    <property type="evidence" value="ECO:0007669"/>
    <property type="project" value="UniProtKB-KW"/>
</dbReference>
<dbReference type="GO" id="GO:0008360">
    <property type="term" value="P:regulation of cell shape"/>
    <property type="evidence" value="ECO:0007669"/>
    <property type="project" value="UniProtKB-KW"/>
</dbReference>
<dbReference type="GO" id="GO:0046677">
    <property type="term" value="P:response to antibiotic"/>
    <property type="evidence" value="ECO:0007669"/>
    <property type="project" value="UniProtKB-UniRule"/>
</dbReference>
<dbReference type="HAMAP" id="MF_01006">
    <property type="entry name" value="Undec_diphosphatase"/>
    <property type="match status" value="1"/>
</dbReference>
<dbReference type="InterPro" id="IPR003824">
    <property type="entry name" value="UppP"/>
</dbReference>
<dbReference type="NCBIfam" id="NF001390">
    <property type="entry name" value="PRK00281.1-4"/>
    <property type="match status" value="1"/>
</dbReference>
<dbReference type="NCBIfam" id="NF001391">
    <property type="entry name" value="PRK00281.1-5"/>
    <property type="match status" value="1"/>
</dbReference>
<dbReference type="PANTHER" id="PTHR30622">
    <property type="entry name" value="UNDECAPRENYL-DIPHOSPHATASE"/>
    <property type="match status" value="1"/>
</dbReference>
<dbReference type="PANTHER" id="PTHR30622:SF3">
    <property type="entry name" value="UNDECAPRENYL-DIPHOSPHATASE"/>
    <property type="match status" value="1"/>
</dbReference>
<dbReference type="Pfam" id="PF02673">
    <property type="entry name" value="BacA"/>
    <property type="match status" value="1"/>
</dbReference>
<gene>
    <name evidence="1" type="primary">uppP</name>
    <name type="synonym">bacA</name>
    <name type="synonym">upk</name>
    <name type="ordered locus">SMU_244</name>
</gene>
<reference key="1">
    <citation type="journal article" date="2002" name="Proc. Natl. Acad. Sci. U.S.A.">
        <title>Genome sequence of Streptococcus mutans UA159, a cariogenic dental pathogen.</title>
        <authorList>
            <person name="Ajdic D.J."/>
            <person name="McShan W.M."/>
            <person name="McLaughlin R.E."/>
            <person name="Savic G."/>
            <person name="Chang J."/>
            <person name="Carson M.B."/>
            <person name="Primeaux C."/>
            <person name="Tian R."/>
            <person name="Kenton S."/>
            <person name="Jia H.G."/>
            <person name="Lin S.P."/>
            <person name="Qian Y."/>
            <person name="Li S."/>
            <person name="Zhu H."/>
            <person name="Najar F.Z."/>
            <person name="Lai H."/>
            <person name="White J."/>
            <person name="Roe B.A."/>
            <person name="Ferretti J.J."/>
        </authorList>
    </citation>
    <scope>NUCLEOTIDE SEQUENCE [LARGE SCALE GENOMIC DNA]</scope>
    <source>
        <strain>ATCC 700610 / UA159</strain>
    </source>
</reference>
<evidence type="ECO:0000255" key="1">
    <source>
        <dbReference type="HAMAP-Rule" id="MF_01006"/>
    </source>
</evidence>
<comment type="function">
    <text evidence="1">Catalyzes the dephosphorylation of undecaprenyl diphosphate (UPP). Confers resistance to bacitracin.</text>
</comment>
<comment type="catalytic activity">
    <reaction evidence="1">
        <text>di-trans,octa-cis-undecaprenyl diphosphate + H2O = di-trans,octa-cis-undecaprenyl phosphate + phosphate + H(+)</text>
        <dbReference type="Rhea" id="RHEA:28094"/>
        <dbReference type="ChEBI" id="CHEBI:15377"/>
        <dbReference type="ChEBI" id="CHEBI:15378"/>
        <dbReference type="ChEBI" id="CHEBI:43474"/>
        <dbReference type="ChEBI" id="CHEBI:58405"/>
        <dbReference type="ChEBI" id="CHEBI:60392"/>
        <dbReference type="EC" id="3.6.1.27"/>
    </reaction>
</comment>
<comment type="subcellular location">
    <subcellularLocation>
        <location evidence="1">Cell membrane</location>
        <topology evidence="1">Multi-pass membrane protein</topology>
    </subcellularLocation>
</comment>
<comment type="miscellaneous">
    <text>Bacitracin is thought to be involved in the inhibition of peptidoglycan synthesis by sequestering undecaprenyl diphosphate, thereby reducing the pool of lipid carrier available.</text>
</comment>
<comment type="similarity">
    <text evidence="1">Belongs to the UppP family.</text>
</comment>